<sequence>MTRLKEKFLNEITPEMMKKFEYSSIMEVPKIEKIVVNMGIGDAVQNSKVLDSAVEELQAITGQKPMVTKAKKSIATFRLREGMPIGAKVTLRGERMYEFFDKLVNVSLPRVRDFRGISNKAFDGRGNYTLGVKEQLIFPEIDYDKVSKTRGMDIVIVTTANTDEEARELLTQFGMPFQK</sequence>
<keyword id="KW-1185">Reference proteome</keyword>
<keyword id="KW-0687">Ribonucleoprotein</keyword>
<keyword id="KW-0689">Ribosomal protein</keyword>
<keyword id="KW-0694">RNA-binding</keyword>
<keyword id="KW-0699">rRNA-binding</keyword>
<keyword id="KW-0820">tRNA-binding</keyword>
<reference key="1">
    <citation type="journal article" date="2009" name="J. Bacteriol.">
        <title>Complete genome sequence of Macrococcus caseolyticus strain JCSCS5402, reflecting the ancestral genome of the human-pathogenic staphylococci.</title>
        <authorList>
            <person name="Baba T."/>
            <person name="Kuwahara-Arai K."/>
            <person name="Uchiyama I."/>
            <person name="Takeuchi F."/>
            <person name="Ito T."/>
            <person name="Hiramatsu K."/>
        </authorList>
    </citation>
    <scope>NUCLEOTIDE SEQUENCE [LARGE SCALE GENOMIC DNA]</scope>
    <source>
        <strain>JCSC5402</strain>
    </source>
</reference>
<comment type="function">
    <text evidence="1">This is one of the proteins that bind and probably mediate the attachment of the 5S RNA into the large ribosomal subunit, where it forms part of the central protuberance. In the 70S ribosome it contacts protein S13 of the 30S subunit (bridge B1b), connecting the 2 subunits; this bridge is implicated in subunit movement. Contacts the P site tRNA; the 5S rRNA and some of its associated proteins might help stabilize positioning of ribosome-bound tRNAs.</text>
</comment>
<comment type="subunit">
    <text evidence="1">Part of the 50S ribosomal subunit; part of the 5S rRNA/L5/L18/L25 subcomplex. Contacts the 5S rRNA and the P site tRNA. Forms a bridge to the 30S subunit in the 70S ribosome.</text>
</comment>
<comment type="similarity">
    <text evidence="1">Belongs to the universal ribosomal protein uL5 family.</text>
</comment>
<evidence type="ECO:0000255" key="1">
    <source>
        <dbReference type="HAMAP-Rule" id="MF_01333"/>
    </source>
</evidence>
<evidence type="ECO:0000305" key="2"/>
<proteinExistence type="inferred from homology"/>
<dbReference type="EMBL" id="AP009484">
    <property type="protein sequence ID" value="BAH16914.1"/>
    <property type="molecule type" value="Genomic_DNA"/>
</dbReference>
<dbReference type="RefSeq" id="WP_012656118.1">
    <property type="nucleotide sequence ID" value="NC_011999.1"/>
</dbReference>
<dbReference type="SMR" id="B9E9K3"/>
<dbReference type="STRING" id="458233.MCCL_0207"/>
<dbReference type="GeneID" id="35294482"/>
<dbReference type="GeneID" id="61130629"/>
<dbReference type="KEGG" id="mcl:MCCL_0207"/>
<dbReference type="eggNOG" id="COG0094">
    <property type="taxonomic scope" value="Bacteria"/>
</dbReference>
<dbReference type="HOGENOM" id="CLU_061015_2_1_9"/>
<dbReference type="OrthoDB" id="9806626at2"/>
<dbReference type="Proteomes" id="UP000001383">
    <property type="component" value="Chromosome"/>
</dbReference>
<dbReference type="GO" id="GO:1990904">
    <property type="term" value="C:ribonucleoprotein complex"/>
    <property type="evidence" value="ECO:0007669"/>
    <property type="project" value="UniProtKB-KW"/>
</dbReference>
<dbReference type="GO" id="GO:0005840">
    <property type="term" value="C:ribosome"/>
    <property type="evidence" value="ECO:0007669"/>
    <property type="project" value="UniProtKB-KW"/>
</dbReference>
<dbReference type="GO" id="GO:0019843">
    <property type="term" value="F:rRNA binding"/>
    <property type="evidence" value="ECO:0007669"/>
    <property type="project" value="UniProtKB-UniRule"/>
</dbReference>
<dbReference type="GO" id="GO:0003735">
    <property type="term" value="F:structural constituent of ribosome"/>
    <property type="evidence" value="ECO:0007669"/>
    <property type="project" value="InterPro"/>
</dbReference>
<dbReference type="GO" id="GO:0000049">
    <property type="term" value="F:tRNA binding"/>
    <property type="evidence" value="ECO:0007669"/>
    <property type="project" value="UniProtKB-UniRule"/>
</dbReference>
<dbReference type="GO" id="GO:0006412">
    <property type="term" value="P:translation"/>
    <property type="evidence" value="ECO:0007669"/>
    <property type="project" value="UniProtKB-UniRule"/>
</dbReference>
<dbReference type="FunFam" id="3.30.1440.10:FF:000001">
    <property type="entry name" value="50S ribosomal protein L5"/>
    <property type="match status" value="1"/>
</dbReference>
<dbReference type="Gene3D" id="3.30.1440.10">
    <property type="match status" value="1"/>
</dbReference>
<dbReference type="HAMAP" id="MF_01333_B">
    <property type="entry name" value="Ribosomal_uL5_B"/>
    <property type="match status" value="1"/>
</dbReference>
<dbReference type="InterPro" id="IPR002132">
    <property type="entry name" value="Ribosomal_uL5"/>
</dbReference>
<dbReference type="InterPro" id="IPR020930">
    <property type="entry name" value="Ribosomal_uL5_bac-type"/>
</dbReference>
<dbReference type="InterPro" id="IPR031309">
    <property type="entry name" value="Ribosomal_uL5_C"/>
</dbReference>
<dbReference type="InterPro" id="IPR020929">
    <property type="entry name" value="Ribosomal_uL5_CS"/>
</dbReference>
<dbReference type="InterPro" id="IPR022803">
    <property type="entry name" value="Ribosomal_uL5_dom_sf"/>
</dbReference>
<dbReference type="InterPro" id="IPR031310">
    <property type="entry name" value="Ribosomal_uL5_N"/>
</dbReference>
<dbReference type="NCBIfam" id="NF000585">
    <property type="entry name" value="PRK00010.1"/>
    <property type="match status" value="1"/>
</dbReference>
<dbReference type="PANTHER" id="PTHR11994">
    <property type="entry name" value="60S RIBOSOMAL PROTEIN L11-RELATED"/>
    <property type="match status" value="1"/>
</dbReference>
<dbReference type="Pfam" id="PF00281">
    <property type="entry name" value="Ribosomal_L5"/>
    <property type="match status" value="1"/>
</dbReference>
<dbReference type="Pfam" id="PF00673">
    <property type="entry name" value="Ribosomal_L5_C"/>
    <property type="match status" value="1"/>
</dbReference>
<dbReference type="PIRSF" id="PIRSF002161">
    <property type="entry name" value="Ribosomal_L5"/>
    <property type="match status" value="1"/>
</dbReference>
<dbReference type="SUPFAM" id="SSF55282">
    <property type="entry name" value="RL5-like"/>
    <property type="match status" value="1"/>
</dbReference>
<dbReference type="PROSITE" id="PS00358">
    <property type="entry name" value="RIBOSOMAL_L5"/>
    <property type="match status" value="1"/>
</dbReference>
<feature type="chain" id="PRO_1000166138" description="Large ribosomal subunit protein uL5">
    <location>
        <begin position="1"/>
        <end position="179"/>
    </location>
</feature>
<organism>
    <name type="scientific">Macrococcus caseolyticus (strain JCSC5402)</name>
    <name type="common">Macrococcoides caseolyticum</name>
    <dbReference type="NCBI Taxonomy" id="458233"/>
    <lineage>
        <taxon>Bacteria</taxon>
        <taxon>Bacillati</taxon>
        <taxon>Bacillota</taxon>
        <taxon>Bacilli</taxon>
        <taxon>Bacillales</taxon>
        <taxon>Staphylococcaceae</taxon>
        <taxon>Macrococcoides</taxon>
    </lineage>
</organism>
<accession>B9E9K3</accession>
<protein>
    <recommendedName>
        <fullName evidence="1">Large ribosomal subunit protein uL5</fullName>
    </recommendedName>
    <alternativeName>
        <fullName evidence="2">50S ribosomal protein L5</fullName>
    </alternativeName>
</protein>
<gene>
    <name evidence="1" type="primary">rplE</name>
    <name type="ordered locus">MCCL_0207</name>
</gene>
<name>RL5_MACCJ</name>